<keyword id="KW-0007">Acetylation</keyword>
<keyword id="KW-0963">Cytoplasm</keyword>
<keyword id="KW-0396">Initiation factor</keyword>
<keyword id="KW-0597">Phosphoprotein</keyword>
<keyword id="KW-0648">Protein biosynthesis</keyword>
<keyword id="KW-1185">Reference proteome</keyword>
<comment type="function">
    <text evidence="2">Acts as a component of the translation initiation factor 2B (eIF2B) complex, which catalyzes the exchange of GDP for GTP on the eukaryotic initiation factor 2 (eIF2) complex gamma subunit. Its guanine nucleotide exchange factor activity is repressed when bound to eIF2 complex phosphorylated on the alpha subunit, thereby limiting the amount of methionyl-initiator methionine tRNA available to the ribosome and consequently global translation is repressed.</text>
</comment>
<comment type="activity regulation">
    <text evidence="2">Activated by the chemical integrated stress response (ISR) inhibitor ISRIB which stimulates guanine nucleotide exchange factor activity for both phosphorylated and unphosphorylated eIF2.</text>
</comment>
<comment type="subunit">
    <text evidence="2">Component of the translation initiation factor 2B (eIF2B) complex which is a heterodecamer of two sets of five different subunits: alpha, beta, gamma, delta and epsilon. Subunits alpha, beta and delta comprise a regulatory subcomplex and subunits epsilon and gamma comprise a catalytic subcomplex. Within the complex, the hexameric regulatory complex resides at the center, with the two heterodimeric catalytic subcomplexes bound on opposite sides.</text>
</comment>
<comment type="subcellular location">
    <subcellularLocation>
        <location evidence="1">Cytoplasm</location>
        <location evidence="1">Cytosol</location>
    </subcellularLocation>
</comment>
<comment type="similarity">
    <text evidence="3">Belongs to the eIF-2B gamma/epsilon subunits family.</text>
</comment>
<protein>
    <recommendedName>
        <fullName>Translation initiation factor eIF2B subunit gamma</fullName>
    </recommendedName>
    <alternativeName>
        <fullName>eIF2B GDP-GTP exchange factor subunit gamma</fullName>
    </alternativeName>
</protein>
<evidence type="ECO:0000250" key="1">
    <source>
        <dbReference type="UniProtKB" id="P56288"/>
    </source>
</evidence>
<evidence type="ECO:0000250" key="2">
    <source>
        <dbReference type="UniProtKB" id="Q9NR50"/>
    </source>
</evidence>
<evidence type="ECO:0000305" key="3"/>
<reference key="1">
    <citation type="submission" date="2007-06" db="EMBL/GenBank/DDBJ databases">
        <authorList>
            <consortium name="NIH - Mammalian Gene Collection (MGC) project"/>
        </authorList>
    </citation>
    <scope>NUCLEOTIDE SEQUENCE [LARGE SCALE MRNA]</scope>
    <source>
        <strain>Hereford</strain>
        <tissue>Brain cortex</tissue>
    </source>
</reference>
<accession>A5PJI7</accession>
<dbReference type="EMBL" id="BC142127">
    <property type="protein sequence ID" value="AAI42128.1"/>
    <property type="molecule type" value="mRNA"/>
</dbReference>
<dbReference type="SMR" id="A5PJI7"/>
<dbReference type="FunCoup" id="A5PJI7">
    <property type="interactions" value="4025"/>
</dbReference>
<dbReference type="STRING" id="9913.ENSBTAP00000049588"/>
<dbReference type="PaxDb" id="9913-ENSBTAP00000049588"/>
<dbReference type="eggNOG" id="KOG1462">
    <property type="taxonomic scope" value="Eukaryota"/>
</dbReference>
<dbReference type="InParanoid" id="A5PJI7"/>
<dbReference type="OrthoDB" id="10250549at2759"/>
<dbReference type="Proteomes" id="UP000009136">
    <property type="component" value="Unplaced"/>
</dbReference>
<dbReference type="GO" id="GO:0005737">
    <property type="term" value="C:cytoplasm"/>
    <property type="evidence" value="ECO:0000250"/>
    <property type="project" value="UniProtKB"/>
</dbReference>
<dbReference type="GO" id="GO:0005829">
    <property type="term" value="C:cytosol"/>
    <property type="evidence" value="ECO:0007669"/>
    <property type="project" value="UniProtKB-SubCell"/>
</dbReference>
<dbReference type="GO" id="GO:0005851">
    <property type="term" value="C:eukaryotic translation initiation factor 2B complex"/>
    <property type="evidence" value="ECO:0000250"/>
    <property type="project" value="UniProtKB"/>
</dbReference>
<dbReference type="GO" id="GO:0032045">
    <property type="term" value="C:guanyl-nucleotide exchange factor complex"/>
    <property type="evidence" value="ECO:0000318"/>
    <property type="project" value="GO_Central"/>
</dbReference>
<dbReference type="GO" id="GO:0005085">
    <property type="term" value="F:guanyl-nucleotide exchange factor activity"/>
    <property type="evidence" value="ECO:0000250"/>
    <property type="project" value="UniProtKB"/>
</dbReference>
<dbReference type="GO" id="GO:0003743">
    <property type="term" value="F:translation initiation factor activity"/>
    <property type="evidence" value="ECO:0000318"/>
    <property type="project" value="GO_Central"/>
</dbReference>
<dbReference type="GO" id="GO:0002183">
    <property type="term" value="P:cytoplasmic translational initiation"/>
    <property type="evidence" value="ECO:0000250"/>
    <property type="project" value="UniProtKB"/>
</dbReference>
<dbReference type="GO" id="GO:0014003">
    <property type="term" value="P:oligodendrocyte development"/>
    <property type="evidence" value="ECO:0000250"/>
    <property type="project" value="UniProtKB"/>
</dbReference>
<dbReference type="GO" id="GO:0050852">
    <property type="term" value="P:T cell receptor signaling pathway"/>
    <property type="evidence" value="ECO:0000250"/>
    <property type="project" value="UniProtKB"/>
</dbReference>
<dbReference type="GO" id="GO:0006413">
    <property type="term" value="P:translational initiation"/>
    <property type="evidence" value="ECO:0000250"/>
    <property type="project" value="UniProtKB"/>
</dbReference>
<dbReference type="CDD" id="cd04198">
    <property type="entry name" value="eIF-2B_gamma_N"/>
    <property type="match status" value="1"/>
</dbReference>
<dbReference type="CDD" id="cd04652">
    <property type="entry name" value="LbH_eIF2B_gamma_C"/>
    <property type="match status" value="1"/>
</dbReference>
<dbReference type="FunFam" id="2.160.10.10:FF:000031">
    <property type="entry name" value="Translation initiation factor eIF-2B subunit gamma"/>
    <property type="match status" value="1"/>
</dbReference>
<dbReference type="FunFam" id="3.90.550.10:FF:000105">
    <property type="entry name" value="translation initiation factor eIF-2B subunit gamma"/>
    <property type="match status" value="1"/>
</dbReference>
<dbReference type="Gene3D" id="2.160.10.10">
    <property type="entry name" value="Hexapeptide repeat proteins"/>
    <property type="match status" value="1"/>
</dbReference>
<dbReference type="Gene3D" id="3.90.550.10">
    <property type="entry name" value="Spore Coat Polysaccharide Biosynthesis Protein SpsA, Chain A"/>
    <property type="match status" value="1"/>
</dbReference>
<dbReference type="InterPro" id="IPR051960">
    <property type="entry name" value="eIF2B_gamma"/>
</dbReference>
<dbReference type="InterPro" id="IPR005835">
    <property type="entry name" value="NTP_transferase_dom"/>
</dbReference>
<dbReference type="InterPro" id="IPR029044">
    <property type="entry name" value="Nucleotide-diphossugar_trans"/>
</dbReference>
<dbReference type="PANTHER" id="PTHR45989">
    <property type="entry name" value="TRANSLATION INITIATION FACTOR EIF-2B SUBUNIT GAMMA"/>
    <property type="match status" value="1"/>
</dbReference>
<dbReference type="PANTHER" id="PTHR45989:SF1">
    <property type="entry name" value="TRANSLATION INITIATION FACTOR EIF-2B SUBUNIT GAMMA"/>
    <property type="match status" value="1"/>
</dbReference>
<dbReference type="Pfam" id="PF25084">
    <property type="entry name" value="LbH_EIF2B"/>
    <property type="match status" value="1"/>
</dbReference>
<dbReference type="Pfam" id="PF00483">
    <property type="entry name" value="NTP_transferase"/>
    <property type="match status" value="1"/>
</dbReference>
<dbReference type="SUPFAM" id="SSF53448">
    <property type="entry name" value="Nucleotide-diphospho-sugar transferases"/>
    <property type="match status" value="1"/>
</dbReference>
<organism>
    <name type="scientific">Bos taurus</name>
    <name type="common">Bovine</name>
    <dbReference type="NCBI Taxonomy" id="9913"/>
    <lineage>
        <taxon>Eukaryota</taxon>
        <taxon>Metazoa</taxon>
        <taxon>Chordata</taxon>
        <taxon>Craniata</taxon>
        <taxon>Vertebrata</taxon>
        <taxon>Euteleostomi</taxon>
        <taxon>Mammalia</taxon>
        <taxon>Eutheria</taxon>
        <taxon>Laurasiatheria</taxon>
        <taxon>Artiodactyla</taxon>
        <taxon>Ruminantia</taxon>
        <taxon>Pecora</taxon>
        <taxon>Bovidae</taxon>
        <taxon>Bovinae</taxon>
        <taxon>Bos</taxon>
    </lineage>
</organism>
<gene>
    <name type="primary">EIF2B3</name>
</gene>
<sequence length="452" mass="50218">MEFQAVVMAVGGGSRMTDLTSSIPKPLLPVGNKPLIWYPLNLLERVGFEEVIVITTKDVQKALCADFNKMKMKLDIVCIPDEADMGTADSLRHIYQKLKTDVLVLSCDLITDVALHEVVDLFRAHDASLAMLMRKGQESLEPVPGQKGKKKAVEQRDFVGVDSTGKRLLFMANEADLDEELIIKGSILQKHPRIRFHTGLVDAHLYCLKKYVVDFLMENKSITSIRSELIPYLVRKQFSSASSQQGQEEKEEDLKKKELKSLDIYSFIKEANTLTLAPYDTCWNACRGDSWEGLSRSQVRCYVHIMKEGLCSRVSTLGLYMEANRQVSKLLPVICPEESLIHSSAQIVSKHMVGADSLIGPDTQVGEKSSIKHSVIGSSCVIRDRVTVTNCLLMNSVTVEEGSNIQSSIICNDAVIEKGADIKNCLIGSGQRIEAKAKRVNVIVGNDQFLEI</sequence>
<feature type="chain" id="PRO_0000317331" description="Translation initiation factor eIF2B subunit gamma">
    <location>
        <begin position="1"/>
        <end position="452"/>
    </location>
</feature>
<feature type="modified residue" description="N-acetylmethionine" evidence="2">
    <location>
        <position position="1"/>
    </location>
</feature>
<feature type="modified residue" description="Phosphoserine" evidence="2">
    <location>
        <position position="261"/>
    </location>
</feature>
<name>EI2BG_BOVIN</name>
<proteinExistence type="evidence at transcript level"/>